<keyword id="KW-0066">ATP synthesis</keyword>
<keyword id="KW-1003">Cell membrane</keyword>
<keyword id="KW-0138">CF(0)</keyword>
<keyword id="KW-0375">Hydrogen ion transport</keyword>
<keyword id="KW-0406">Ion transport</keyword>
<keyword id="KW-0472">Membrane</keyword>
<keyword id="KW-0812">Transmembrane</keyword>
<keyword id="KW-1133">Transmembrane helix</keyword>
<keyword id="KW-0813">Transport</keyword>
<gene>
    <name evidence="1" type="primary">atpF</name>
    <name type="ordered locus">SAV2107</name>
</gene>
<accession>Q99SF1</accession>
<name>ATPF_STAAM</name>
<protein>
    <recommendedName>
        <fullName evidence="1">ATP synthase subunit b</fullName>
    </recommendedName>
    <alternativeName>
        <fullName evidence="1">ATP synthase F(0) sector subunit b</fullName>
    </alternativeName>
    <alternativeName>
        <fullName evidence="1">ATPase subunit I</fullName>
    </alternativeName>
    <alternativeName>
        <fullName evidence="1">F-type ATPase subunit b</fullName>
        <shortName evidence="1">F-ATPase subunit b</shortName>
    </alternativeName>
</protein>
<evidence type="ECO:0000255" key="1">
    <source>
        <dbReference type="HAMAP-Rule" id="MF_01398"/>
    </source>
</evidence>
<sequence length="173" mass="19539">MTETANLFVLGAAGGVEWGTVIVQVLTFIVLLALLKKFAWGPLKDVMDKRERDINRDIDDAEQAKLNAQKLEEENKQKLKETQEEVQKILEDAKVQARQQQEQIIHEANVRANGMIETAQSEINSQKERAIADINNQVSELSVLIASKVLRKEISEQDQKALVDKYLKEAGDK</sequence>
<reference key="1">
    <citation type="journal article" date="2001" name="Lancet">
        <title>Whole genome sequencing of meticillin-resistant Staphylococcus aureus.</title>
        <authorList>
            <person name="Kuroda M."/>
            <person name="Ohta T."/>
            <person name="Uchiyama I."/>
            <person name="Baba T."/>
            <person name="Yuzawa H."/>
            <person name="Kobayashi I."/>
            <person name="Cui L."/>
            <person name="Oguchi A."/>
            <person name="Aoki K."/>
            <person name="Nagai Y."/>
            <person name="Lian J.-Q."/>
            <person name="Ito T."/>
            <person name="Kanamori M."/>
            <person name="Matsumaru H."/>
            <person name="Maruyama A."/>
            <person name="Murakami H."/>
            <person name="Hosoyama A."/>
            <person name="Mizutani-Ui Y."/>
            <person name="Takahashi N.K."/>
            <person name="Sawano T."/>
            <person name="Inoue R."/>
            <person name="Kaito C."/>
            <person name="Sekimizu K."/>
            <person name="Hirakawa H."/>
            <person name="Kuhara S."/>
            <person name="Goto S."/>
            <person name="Yabuzaki J."/>
            <person name="Kanehisa M."/>
            <person name="Yamashita A."/>
            <person name="Oshima K."/>
            <person name="Furuya K."/>
            <person name="Yoshino C."/>
            <person name="Shiba T."/>
            <person name="Hattori M."/>
            <person name="Ogasawara N."/>
            <person name="Hayashi H."/>
            <person name="Hiramatsu K."/>
        </authorList>
    </citation>
    <scope>NUCLEOTIDE SEQUENCE [LARGE SCALE GENOMIC DNA]</scope>
    <source>
        <strain>Mu50 / ATCC 700699</strain>
    </source>
</reference>
<comment type="function">
    <text evidence="1">F(1)F(0) ATP synthase produces ATP from ADP in the presence of a proton or sodium gradient. F-type ATPases consist of two structural domains, F(1) containing the extramembraneous catalytic core and F(0) containing the membrane proton channel, linked together by a central stalk and a peripheral stalk. During catalysis, ATP synthesis in the catalytic domain of F(1) is coupled via a rotary mechanism of the central stalk subunits to proton translocation.</text>
</comment>
<comment type="function">
    <text evidence="1">Component of the F(0) channel, it forms part of the peripheral stalk, linking F(1) to F(0).</text>
</comment>
<comment type="subunit">
    <text evidence="1">F-type ATPases have 2 components, F(1) - the catalytic core - and F(0) - the membrane proton channel. F(1) has five subunits: alpha(3), beta(3), gamma(1), delta(1), epsilon(1). F(0) has three main subunits: a(1), b(2) and c(10-14). The alpha and beta chains form an alternating ring which encloses part of the gamma chain. F(1) is attached to F(0) by a central stalk formed by the gamma and epsilon chains, while a peripheral stalk is formed by the delta and b chains.</text>
</comment>
<comment type="subcellular location">
    <subcellularLocation>
        <location evidence="1">Cell membrane</location>
        <topology evidence="1">Single-pass membrane protein</topology>
    </subcellularLocation>
</comment>
<comment type="similarity">
    <text evidence="1">Belongs to the ATPase B chain family.</text>
</comment>
<organism>
    <name type="scientific">Staphylococcus aureus (strain Mu50 / ATCC 700699)</name>
    <dbReference type="NCBI Taxonomy" id="158878"/>
    <lineage>
        <taxon>Bacteria</taxon>
        <taxon>Bacillati</taxon>
        <taxon>Bacillota</taxon>
        <taxon>Bacilli</taxon>
        <taxon>Bacillales</taxon>
        <taxon>Staphylococcaceae</taxon>
        <taxon>Staphylococcus</taxon>
    </lineage>
</organism>
<feature type="chain" id="PRO_0000223708" description="ATP synthase subunit b">
    <location>
        <begin position="1"/>
        <end position="173"/>
    </location>
</feature>
<feature type="transmembrane region" description="Helical" evidence="1">
    <location>
        <begin position="15"/>
        <end position="35"/>
    </location>
</feature>
<proteinExistence type="inferred from homology"/>
<dbReference type="EMBL" id="BA000017">
    <property type="protein sequence ID" value="BAB58269.1"/>
    <property type="molecule type" value="Genomic_DNA"/>
</dbReference>
<dbReference type="RefSeq" id="WP_000140679.1">
    <property type="nucleotide sequence ID" value="NC_002758.2"/>
</dbReference>
<dbReference type="SMR" id="Q99SF1"/>
<dbReference type="KEGG" id="sav:SAV2107"/>
<dbReference type="HOGENOM" id="CLU_079215_4_2_9"/>
<dbReference type="PhylomeDB" id="Q99SF1"/>
<dbReference type="Proteomes" id="UP000002481">
    <property type="component" value="Chromosome"/>
</dbReference>
<dbReference type="GO" id="GO:0005886">
    <property type="term" value="C:plasma membrane"/>
    <property type="evidence" value="ECO:0007669"/>
    <property type="project" value="UniProtKB-SubCell"/>
</dbReference>
<dbReference type="GO" id="GO:0045259">
    <property type="term" value="C:proton-transporting ATP synthase complex"/>
    <property type="evidence" value="ECO:0007669"/>
    <property type="project" value="UniProtKB-KW"/>
</dbReference>
<dbReference type="GO" id="GO:0046933">
    <property type="term" value="F:proton-transporting ATP synthase activity, rotational mechanism"/>
    <property type="evidence" value="ECO:0007669"/>
    <property type="project" value="UniProtKB-UniRule"/>
</dbReference>
<dbReference type="GO" id="GO:0046961">
    <property type="term" value="F:proton-transporting ATPase activity, rotational mechanism"/>
    <property type="evidence" value="ECO:0007669"/>
    <property type="project" value="TreeGrafter"/>
</dbReference>
<dbReference type="CDD" id="cd06503">
    <property type="entry name" value="ATP-synt_Fo_b"/>
    <property type="match status" value="1"/>
</dbReference>
<dbReference type="HAMAP" id="MF_01398">
    <property type="entry name" value="ATP_synth_b_bprime"/>
    <property type="match status" value="1"/>
</dbReference>
<dbReference type="InterPro" id="IPR028987">
    <property type="entry name" value="ATP_synth_B-like_membr_sf"/>
</dbReference>
<dbReference type="InterPro" id="IPR002146">
    <property type="entry name" value="ATP_synth_b/b'su_bac/chlpt"/>
</dbReference>
<dbReference type="InterPro" id="IPR005864">
    <property type="entry name" value="ATP_synth_F0_bsu_bac"/>
</dbReference>
<dbReference type="InterPro" id="IPR050059">
    <property type="entry name" value="ATP_synthase_B_chain"/>
</dbReference>
<dbReference type="NCBIfam" id="TIGR01144">
    <property type="entry name" value="ATP_synt_b"/>
    <property type="match status" value="1"/>
</dbReference>
<dbReference type="NCBIfam" id="NF009987">
    <property type="entry name" value="PRK13453.1"/>
    <property type="match status" value="1"/>
</dbReference>
<dbReference type="PANTHER" id="PTHR33445:SF1">
    <property type="entry name" value="ATP SYNTHASE SUBUNIT B"/>
    <property type="match status" value="1"/>
</dbReference>
<dbReference type="PANTHER" id="PTHR33445">
    <property type="entry name" value="ATP SYNTHASE SUBUNIT B', CHLOROPLASTIC"/>
    <property type="match status" value="1"/>
</dbReference>
<dbReference type="Pfam" id="PF00430">
    <property type="entry name" value="ATP-synt_B"/>
    <property type="match status" value="1"/>
</dbReference>
<dbReference type="SUPFAM" id="SSF81573">
    <property type="entry name" value="F1F0 ATP synthase subunit B, membrane domain"/>
    <property type="match status" value="1"/>
</dbReference>